<organism>
    <name type="scientific">Arabidopsis thaliana</name>
    <name type="common">Mouse-ear cress</name>
    <dbReference type="NCBI Taxonomy" id="3702"/>
    <lineage>
        <taxon>Eukaryota</taxon>
        <taxon>Viridiplantae</taxon>
        <taxon>Streptophyta</taxon>
        <taxon>Embryophyta</taxon>
        <taxon>Tracheophyta</taxon>
        <taxon>Spermatophyta</taxon>
        <taxon>Magnoliopsida</taxon>
        <taxon>eudicotyledons</taxon>
        <taxon>Gunneridae</taxon>
        <taxon>Pentapetalae</taxon>
        <taxon>rosids</taxon>
        <taxon>malvids</taxon>
        <taxon>Brassicales</taxon>
        <taxon>Brassicaceae</taxon>
        <taxon>Camelineae</taxon>
        <taxon>Arabidopsis</taxon>
    </lineage>
</organism>
<dbReference type="EMBL" id="AY102637">
    <property type="protein sequence ID" value="AAM52879.1"/>
    <property type="molecule type" value="mRNA"/>
</dbReference>
<dbReference type="EMBL" id="AL132969">
    <property type="protein sequence ID" value="CAB86895.1"/>
    <property type="status" value="ALT_SEQ"/>
    <property type="molecule type" value="Genomic_DNA"/>
</dbReference>
<dbReference type="EMBL" id="CP002686">
    <property type="protein sequence ID" value="AEE79009.1"/>
    <property type="molecule type" value="Genomic_DNA"/>
</dbReference>
<dbReference type="PIR" id="T47548">
    <property type="entry name" value="T47548"/>
</dbReference>
<dbReference type="RefSeq" id="NP_190859.2">
    <property type="nucleotide sequence ID" value="NM_115151.3"/>
</dbReference>
<dbReference type="BioGRID" id="9774">
    <property type="interactions" value="13"/>
</dbReference>
<dbReference type="FunCoup" id="Q8L8A7">
    <property type="interactions" value="174"/>
</dbReference>
<dbReference type="IntAct" id="Q8L8A7">
    <property type="interactions" value="14"/>
</dbReference>
<dbReference type="STRING" id="3702.Q8L8A7"/>
<dbReference type="PaxDb" id="3702-AT3G52910.1"/>
<dbReference type="ProteomicsDB" id="247036"/>
<dbReference type="EnsemblPlants" id="AT3G52910.1">
    <property type="protein sequence ID" value="AT3G52910.1"/>
    <property type="gene ID" value="AT3G52910"/>
</dbReference>
<dbReference type="GeneID" id="824457"/>
<dbReference type="Gramene" id="AT3G52910.1">
    <property type="protein sequence ID" value="AT3G52910.1"/>
    <property type="gene ID" value="AT3G52910"/>
</dbReference>
<dbReference type="KEGG" id="ath:AT3G52910"/>
<dbReference type="Araport" id="AT3G52910"/>
<dbReference type="TAIR" id="AT3G52910">
    <property type="gene designation" value="GRF4"/>
</dbReference>
<dbReference type="eggNOG" id="ENOG502QTJ4">
    <property type="taxonomic scope" value="Eukaryota"/>
</dbReference>
<dbReference type="HOGENOM" id="CLU_037902_1_0_1"/>
<dbReference type="InParanoid" id="Q8L8A7"/>
<dbReference type="OMA" id="SMNWWSS"/>
<dbReference type="OrthoDB" id="1927209at2759"/>
<dbReference type="PhylomeDB" id="Q8L8A7"/>
<dbReference type="PRO" id="PR:Q8L8A7"/>
<dbReference type="Proteomes" id="UP000006548">
    <property type="component" value="Chromosome 3"/>
</dbReference>
<dbReference type="ExpressionAtlas" id="Q8L8A7">
    <property type="expression patterns" value="baseline and differential"/>
</dbReference>
<dbReference type="GO" id="GO:0005634">
    <property type="term" value="C:nucleus"/>
    <property type="evidence" value="ECO:0000250"/>
    <property type="project" value="TAIR"/>
</dbReference>
<dbReference type="GO" id="GO:0005524">
    <property type="term" value="F:ATP binding"/>
    <property type="evidence" value="ECO:0007669"/>
    <property type="project" value="InterPro"/>
</dbReference>
<dbReference type="GO" id="GO:0006351">
    <property type="term" value="P:DNA-templated transcription"/>
    <property type="evidence" value="ECO:0007669"/>
    <property type="project" value="InterPro"/>
</dbReference>
<dbReference type="GO" id="GO:0048366">
    <property type="term" value="P:leaf development"/>
    <property type="evidence" value="ECO:0000304"/>
    <property type="project" value="TAIR"/>
</dbReference>
<dbReference type="GO" id="GO:0006355">
    <property type="term" value="P:regulation of DNA-templated transcription"/>
    <property type="evidence" value="ECO:0007669"/>
    <property type="project" value="InterPro"/>
</dbReference>
<dbReference type="InterPro" id="IPR014978">
    <property type="entry name" value="Gln-Leu-Gln_QLQ"/>
</dbReference>
<dbReference type="InterPro" id="IPR031137">
    <property type="entry name" value="GRF"/>
</dbReference>
<dbReference type="InterPro" id="IPR014977">
    <property type="entry name" value="WRC_dom"/>
</dbReference>
<dbReference type="PANTHER" id="PTHR31602:SF56">
    <property type="entry name" value="GROWTH-REGULATING FACTOR 4"/>
    <property type="match status" value="1"/>
</dbReference>
<dbReference type="PANTHER" id="PTHR31602">
    <property type="entry name" value="GROWTH-REGULATING FACTOR 5"/>
    <property type="match status" value="1"/>
</dbReference>
<dbReference type="Pfam" id="PF08880">
    <property type="entry name" value="QLQ"/>
    <property type="match status" value="1"/>
</dbReference>
<dbReference type="Pfam" id="PF08879">
    <property type="entry name" value="WRC"/>
    <property type="match status" value="1"/>
</dbReference>
<dbReference type="SMART" id="SM00951">
    <property type="entry name" value="QLQ"/>
    <property type="match status" value="1"/>
</dbReference>
<dbReference type="PROSITE" id="PS51666">
    <property type="entry name" value="QLQ"/>
    <property type="match status" value="1"/>
</dbReference>
<dbReference type="PROSITE" id="PS51667">
    <property type="entry name" value="WRC"/>
    <property type="match status" value="1"/>
</dbReference>
<name>GRF4_ARATH</name>
<reference key="1">
    <citation type="journal article" date="2003" name="Plant J.">
        <title>The AtGRF family of putative transcription factors is involved in leaf and cotyledon growth in Arabidopsis.</title>
        <authorList>
            <person name="Kim J.H."/>
            <person name="Choi D."/>
            <person name="Kende H."/>
        </authorList>
    </citation>
    <scope>NUCLEOTIDE SEQUENCE [MRNA]</scope>
    <scope>GENE FAMILY</scope>
    <scope>NOMENCLATURE</scope>
    <scope>TISSUE SPECIFICITY</scope>
</reference>
<reference key="2">
    <citation type="journal article" date="2000" name="Nature">
        <title>Sequence and analysis of chromosome 3 of the plant Arabidopsis thaliana.</title>
        <authorList>
            <person name="Salanoubat M."/>
            <person name="Lemcke K."/>
            <person name="Rieger M."/>
            <person name="Ansorge W."/>
            <person name="Unseld M."/>
            <person name="Fartmann B."/>
            <person name="Valle G."/>
            <person name="Bloecker H."/>
            <person name="Perez-Alonso M."/>
            <person name="Obermaier B."/>
            <person name="Delseny M."/>
            <person name="Boutry M."/>
            <person name="Grivell L.A."/>
            <person name="Mache R."/>
            <person name="Puigdomenech P."/>
            <person name="De Simone V."/>
            <person name="Choisne N."/>
            <person name="Artiguenave F."/>
            <person name="Robert C."/>
            <person name="Brottier P."/>
            <person name="Wincker P."/>
            <person name="Cattolico L."/>
            <person name="Weissenbach J."/>
            <person name="Saurin W."/>
            <person name="Quetier F."/>
            <person name="Schaefer M."/>
            <person name="Mueller-Auer S."/>
            <person name="Gabel C."/>
            <person name="Fuchs M."/>
            <person name="Benes V."/>
            <person name="Wurmbach E."/>
            <person name="Drzonek H."/>
            <person name="Erfle H."/>
            <person name="Jordan N."/>
            <person name="Bangert S."/>
            <person name="Wiedelmann R."/>
            <person name="Kranz H."/>
            <person name="Voss H."/>
            <person name="Holland R."/>
            <person name="Brandt P."/>
            <person name="Nyakatura G."/>
            <person name="Vezzi A."/>
            <person name="D'Angelo M."/>
            <person name="Pallavicini A."/>
            <person name="Toppo S."/>
            <person name="Simionati B."/>
            <person name="Conrad A."/>
            <person name="Hornischer K."/>
            <person name="Kauer G."/>
            <person name="Loehnert T.-H."/>
            <person name="Nordsiek G."/>
            <person name="Reichelt J."/>
            <person name="Scharfe M."/>
            <person name="Schoen O."/>
            <person name="Bargues M."/>
            <person name="Terol J."/>
            <person name="Climent J."/>
            <person name="Navarro P."/>
            <person name="Collado C."/>
            <person name="Perez-Perez A."/>
            <person name="Ottenwaelder B."/>
            <person name="Duchemin D."/>
            <person name="Cooke R."/>
            <person name="Laudie M."/>
            <person name="Berger-Llauro C."/>
            <person name="Purnelle B."/>
            <person name="Masuy D."/>
            <person name="de Haan M."/>
            <person name="Maarse A.C."/>
            <person name="Alcaraz J.-P."/>
            <person name="Cottet A."/>
            <person name="Casacuberta E."/>
            <person name="Monfort A."/>
            <person name="Argiriou A."/>
            <person name="Flores M."/>
            <person name="Liguori R."/>
            <person name="Vitale D."/>
            <person name="Mannhaupt G."/>
            <person name="Haase D."/>
            <person name="Schoof H."/>
            <person name="Rudd S."/>
            <person name="Zaccaria P."/>
            <person name="Mewes H.-W."/>
            <person name="Mayer K.F.X."/>
            <person name="Kaul S."/>
            <person name="Town C.D."/>
            <person name="Koo H.L."/>
            <person name="Tallon L.J."/>
            <person name="Jenkins J."/>
            <person name="Rooney T."/>
            <person name="Rizzo M."/>
            <person name="Walts A."/>
            <person name="Utterback T."/>
            <person name="Fujii C.Y."/>
            <person name="Shea T.P."/>
            <person name="Creasy T.H."/>
            <person name="Haas B."/>
            <person name="Maiti R."/>
            <person name="Wu D."/>
            <person name="Peterson J."/>
            <person name="Van Aken S."/>
            <person name="Pai G."/>
            <person name="Militscher J."/>
            <person name="Sellers P."/>
            <person name="Gill J.E."/>
            <person name="Feldblyum T.V."/>
            <person name="Preuss D."/>
            <person name="Lin X."/>
            <person name="Nierman W.C."/>
            <person name="Salzberg S.L."/>
            <person name="White O."/>
            <person name="Venter J.C."/>
            <person name="Fraser C.M."/>
            <person name="Kaneko T."/>
            <person name="Nakamura Y."/>
            <person name="Sato S."/>
            <person name="Kato T."/>
            <person name="Asamizu E."/>
            <person name="Sasamoto S."/>
            <person name="Kimura T."/>
            <person name="Idesawa K."/>
            <person name="Kawashima K."/>
            <person name="Kishida Y."/>
            <person name="Kiyokawa C."/>
            <person name="Kohara M."/>
            <person name="Matsumoto M."/>
            <person name="Matsuno A."/>
            <person name="Muraki A."/>
            <person name="Nakayama S."/>
            <person name="Nakazaki N."/>
            <person name="Shinpo S."/>
            <person name="Takeuchi C."/>
            <person name="Wada T."/>
            <person name="Watanabe A."/>
            <person name="Yamada M."/>
            <person name="Yasuda M."/>
            <person name="Tabata S."/>
        </authorList>
    </citation>
    <scope>NUCLEOTIDE SEQUENCE [LARGE SCALE GENOMIC DNA]</scope>
    <source>
        <strain>cv. Columbia</strain>
    </source>
</reference>
<reference key="3">
    <citation type="journal article" date="2017" name="Plant J.">
        <title>Araport11: a complete reannotation of the Arabidopsis thaliana reference genome.</title>
        <authorList>
            <person name="Cheng C.Y."/>
            <person name="Krishnakumar V."/>
            <person name="Chan A.P."/>
            <person name="Thibaud-Nissen F."/>
            <person name="Schobel S."/>
            <person name="Town C.D."/>
        </authorList>
    </citation>
    <scope>GENOME REANNOTATION</scope>
    <source>
        <strain>cv. Columbia</strain>
    </source>
</reference>
<reference key="4">
    <citation type="journal article" date="2004" name="Mol. Cell">
        <title>Computational identification of plant microRNAs and their targets, including a stress-induced miRNA.</title>
        <authorList>
            <person name="Jones-Rhoades M.W."/>
            <person name="Bartel D.P."/>
        </authorList>
    </citation>
    <scope>INDUCTION</scope>
</reference>
<reference key="5">
    <citation type="journal article" date="2009" name="Physiol. Plantarum">
        <title>Ectopic expression of miR396 suppresses GRF target gene expression and alters leaf growth in Arabidopsis.</title>
        <authorList>
            <person name="Liu D."/>
            <person name="Song Y."/>
            <person name="Chen Z."/>
            <person name="Yu D."/>
        </authorList>
    </citation>
    <scope>INDUCTION</scope>
</reference>
<reference key="6">
    <citation type="journal article" date="2010" name="Development">
        <title>Control of cell proliferation in Arabidopsis thaliana by microRNA miR396.</title>
        <authorList>
            <person name="Rodriguez R.E."/>
            <person name="Mecchia M.A."/>
            <person name="Debernardi J.M."/>
            <person name="Schommer C."/>
            <person name="Weigel D."/>
            <person name="Palatnik J.F."/>
        </authorList>
    </citation>
    <scope>DEVELOPMENTAL STAGE</scope>
    <scope>INDUCTION</scope>
</reference>
<protein>
    <recommendedName>
        <fullName>Growth-regulating factor 4</fullName>
        <shortName>AtGRF4</shortName>
    </recommendedName>
    <alternativeName>
        <fullName>Transcription activator GRF4</fullName>
    </alternativeName>
</protein>
<evidence type="ECO:0000250" key="1"/>
<evidence type="ECO:0000255" key="2">
    <source>
        <dbReference type="PROSITE-ProRule" id="PRU01001"/>
    </source>
</evidence>
<evidence type="ECO:0000255" key="3">
    <source>
        <dbReference type="PROSITE-ProRule" id="PRU01002"/>
    </source>
</evidence>
<evidence type="ECO:0000256" key="4">
    <source>
        <dbReference type="SAM" id="MobiDB-lite"/>
    </source>
</evidence>
<evidence type="ECO:0000269" key="5">
    <source>
    </source>
</evidence>
<evidence type="ECO:0000269" key="6">
    <source>
    </source>
</evidence>
<evidence type="ECO:0000269" key="7">
    <source>
    </source>
</evidence>
<evidence type="ECO:0000269" key="8">
    <source>
    </source>
</evidence>
<evidence type="ECO:0000305" key="9"/>
<feature type="chain" id="PRO_0000419295" description="Growth-regulating factor 4">
    <location>
        <begin position="1"/>
        <end position="380"/>
    </location>
</feature>
<feature type="domain" description="QLQ" evidence="2">
    <location>
        <begin position="82"/>
        <end position="117"/>
    </location>
</feature>
<feature type="domain" description="WRC" evidence="3">
    <location>
        <begin position="151"/>
        <end position="195"/>
    </location>
</feature>
<feature type="region of interest" description="Disordered" evidence="4">
    <location>
        <begin position="1"/>
        <end position="21"/>
    </location>
</feature>
<feature type="region of interest" description="Disordered" evidence="4">
    <location>
        <begin position="222"/>
        <end position="270"/>
    </location>
</feature>
<feature type="region of interest" description="Disordered" evidence="4">
    <location>
        <begin position="284"/>
        <end position="330"/>
    </location>
</feature>
<feature type="short sequence motif" description="Bipartite nuclear localization signal" evidence="3">
    <location>
        <begin position="156"/>
        <end position="166"/>
    </location>
</feature>
<feature type="short sequence motif" description="Bipartite nuclear localization signal" evidence="3">
    <location>
        <begin position="184"/>
        <end position="191"/>
    </location>
</feature>
<feature type="compositionally biased region" description="Low complexity" evidence="4">
    <location>
        <begin position="228"/>
        <end position="245"/>
    </location>
</feature>
<feature type="compositionally biased region" description="Low complexity" evidence="4">
    <location>
        <begin position="285"/>
        <end position="296"/>
    </location>
</feature>
<feature type="compositionally biased region" description="Polar residues" evidence="4">
    <location>
        <begin position="297"/>
        <end position="320"/>
    </location>
</feature>
<keyword id="KW-0010">Activator</keyword>
<keyword id="KW-0539">Nucleus</keyword>
<keyword id="KW-1185">Reference proteome</keyword>
<keyword id="KW-0804">Transcription</keyword>
<keyword id="KW-0805">Transcription regulation</keyword>
<sequence length="380" mass="42534">MDLQLKQWRSQQQNESEEQGSAATKISNFFFDQIQSQTATSAAAAPLPLFVPEPTSSSSFSCFSPDSSNSSSSSRFLKMGNFFSWAQWQELELQALIYRYMLAGASVPQELLLPIKKSLLHQSPMHFLHHPLQHSFPHHQPSWYWGRGAMDPEPGRCKRTDGKKWRCSRDVVAGHKYCDRHIHRGRNRSRKPVETATTTITTTATTTASSFVLGEELGHGPNNNHFFSSGSSQPLHLSHQQSCSSEMKQESNNNKRPYEANSGFSNGRSDDGHILRHFFDDWPRSSDSTSSPMSSSTCHLSISMPGNNTSSDVSLKLSTGNEEEEENMRNNNNEREQMNWWSNGGNHHNNMGGPLAEALRSASSTSSVLHQMGISTQVFH</sequence>
<comment type="function">
    <text evidence="1">Transcription activator that plays a role in the regulation of cell expansion in leaf and cotyledons tissues. Component of a network formed by miR396, the GRFs and their interacting factors (GIFs) acting in the regulation of meristem function, at least partially through the control of cell proliferation.</text>
</comment>
<comment type="interaction">
    <interactant intactId="EBI-1396671">
        <id>Q8L8A7</id>
    </interactant>
    <interactant intactId="EBI-1396623">
        <id>Q8L8A5</id>
        <label>GIF1</label>
    </interactant>
    <organismsDiffer>false</organismsDiffer>
    <experiments>3</experiments>
</comment>
<comment type="interaction">
    <interactant intactId="EBI-1396671">
        <id>Q8L8A7</id>
    </interactant>
    <interactant intactId="EBI-1396863">
        <id>Q9MAL9</id>
        <label>GIF2</label>
    </interactant>
    <organismsDiffer>false</organismsDiffer>
    <experiments>3</experiments>
</comment>
<comment type="interaction">
    <interactant intactId="EBI-1396671">
        <id>Q8L8A7</id>
    </interactant>
    <interactant intactId="EBI-15194507">
        <id>Q93VH6</id>
        <label>GIF3</label>
    </interactant>
    <organismsDiffer>false</organismsDiffer>
    <experiments>4</experiments>
</comment>
<comment type="subcellular location">
    <subcellularLocation>
        <location evidence="3">Nucleus</location>
    </subcellularLocation>
</comment>
<comment type="tissue specificity">
    <text evidence="5">Strongly expressed in actively growing and developing tissues, such as roots, upper stems, and shoot tips containing the shoot apical meristem (SAM) and flower buds. Also expressed in mature flowers, but weakly expressed in mature stems and leaves.</text>
</comment>
<comment type="developmental stage">
    <text evidence="8">Expressed during the early stages of leaf development and expression decreases with the maturation of the leaf.</text>
</comment>
<comment type="induction">
    <text evidence="6 7 8">microRNA 396 (miR396a or miR396b) negatively regulates growth-regulating factors (GRF1-4 and GRF7-9).</text>
</comment>
<comment type="domain">
    <text>The QLQ domain and WRC domain may be involved in protein-protein interaction and DNA-binding, respectively.</text>
</comment>
<comment type="similarity">
    <text evidence="9">Belongs to the GRF family.</text>
</comment>
<comment type="sequence caution" evidence="9">
    <conflict type="erroneous gene model prediction">
        <sequence resource="EMBL-CDS" id="CAB86895"/>
    </conflict>
</comment>
<gene>
    <name type="primary">GRF4</name>
    <name type="ordered locus">At3g52910</name>
    <name type="ORF">F8J2_80</name>
</gene>
<proteinExistence type="evidence at protein level"/>
<accession>Q8L8A7</accession>
<accession>Q9LFA0</accession>